<feature type="chain" id="PRO_1000201240" description="UPF0502 protein YceH">
    <location>
        <begin position="1"/>
        <end position="215"/>
    </location>
</feature>
<feature type="modified residue" description="N6-acetyllysine" evidence="1">
    <location>
        <position position="80"/>
    </location>
</feature>
<accession>B6I9E4</accession>
<gene>
    <name evidence="1" type="primary">yceH</name>
    <name type="ordered locus">ECSE_1130</name>
</gene>
<dbReference type="EMBL" id="AP009240">
    <property type="protein sequence ID" value="BAG76654.1"/>
    <property type="molecule type" value="Genomic_DNA"/>
</dbReference>
<dbReference type="RefSeq" id="WP_000877116.1">
    <property type="nucleotide sequence ID" value="NC_011415.1"/>
</dbReference>
<dbReference type="SMR" id="B6I9E4"/>
<dbReference type="KEGG" id="ecy:ECSE_1130"/>
<dbReference type="HOGENOM" id="CLU_057831_2_0_6"/>
<dbReference type="Proteomes" id="UP000008199">
    <property type="component" value="Chromosome"/>
</dbReference>
<dbReference type="FunFam" id="1.10.10.10:FF:000196">
    <property type="entry name" value="UPF0502 protein YceH"/>
    <property type="match status" value="1"/>
</dbReference>
<dbReference type="FunFam" id="1.10.10.10:FF:000241">
    <property type="entry name" value="UPF0502 protein YceH"/>
    <property type="match status" value="1"/>
</dbReference>
<dbReference type="Gene3D" id="1.10.10.10">
    <property type="entry name" value="Winged helix-like DNA-binding domain superfamily/Winged helix DNA-binding domain"/>
    <property type="match status" value="2"/>
</dbReference>
<dbReference type="HAMAP" id="MF_01584">
    <property type="entry name" value="UPF0502"/>
    <property type="match status" value="1"/>
</dbReference>
<dbReference type="InterPro" id="IPR007432">
    <property type="entry name" value="DUF480"/>
</dbReference>
<dbReference type="InterPro" id="IPR036388">
    <property type="entry name" value="WH-like_DNA-bd_sf"/>
</dbReference>
<dbReference type="InterPro" id="IPR036390">
    <property type="entry name" value="WH_DNA-bd_sf"/>
</dbReference>
<dbReference type="NCBIfam" id="NF008413">
    <property type="entry name" value="PRK11239.1"/>
    <property type="match status" value="1"/>
</dbReference>
<dbReference type="PANTHER" id="PTHR38768">
    <property type="entry name" value="UPF0502 PROTEIN YCEH"/>
    <property type="match status" value="1"/>
</dbReference>
<dbReference type="PANTHER" id="PTHR38768:SF1">
    <property type="entry name" value="UPF0502 PROTEIN YCEH"/>
    <property type="match status" value="1"/>
</dbReference>
<dbReference type="Pfam" id="PF04337">
    <property type="entry name" value="DUF480"/>
    <property type="match status" value="1"/>
</dbReference>
<dbReference type="SUPFAM" id="SSF46785">
    <property type="entry name" value="Winged helix' DNA-binding domain"/>
    <property type="match status" value="2"/>
</dbReference>
<sequence>MKYQLTALEARVIGCLLEKQVTTPEQYPLSVNGVVTACNQKTNREPVMNLSESEVQEQLDNLVKRHYLRTVSGFGNRVTKYEQRFCNSEFGDLKLSAAEVALITTLLLRGAQTPGELRSRAARMYEFSDMAEVESTLEQLANREDGPFVVRLAREPGKRESRYMHLFSGEVEDQPAVTDMSNAVDGDLQARVEALEIEVAELKQRLDSLLAHLGD</sequence>
<name>YCEH_ECOSE</name>
<evidence type="ECO:0000255" key="1">
    <source>
        <dbReference type="HAMAP-Rule" id="MF_01584"/>
    </source>
</evidence>
<organism>
    <name type="scientific">Escherichia coli (strain SE11)</name>
    <dbReference type="NCBI Taxonomy" id="409438"/>
    <lineage>
        <taxon>Bacteria</taxon>
        <taxon>Pseudomonadati</taxon>
        <taxon>Pseudomonadota</taxon>
        <taxon>Gammaproteobacteria</taxon>
        <taxon>Enterobacterales</taxon>
        <taxon>Enterobacteriaceae</taxon>
        <taxon>Escherichia</taxon>
    </lineage>
</organism>
<protein>
    <recommendedName>
        <fullName evidence="1">UPF0502 protein YceH</fullName>
    </recommendedName>
</protein>
<reference key="1">
    <citation type="journal article" date="2008" name="DNA Res.">
        <title>Complete genome sequence and comparative analysis of the wild-type commensal Escherichia coli strain SE11 isolated from a healthy adult.</title>
        <authorList>
            <person name="Oshima K."/>
            <person name="Toh H."/>
            <person name="Ogura Y."/>
            <person name="Sasamoto H."/>
            <person name="Morita H."/>
            <person name="Park S.-H."/>
            <person name="Ooka T."/>
            <person name="Iyoda S."/>
            <person name="Taylor T.D."/>
            <person name="Hayashi T."/>
            <person name="Itoh K."/>
            <person name="Hattori M."/>
        </authorList>
    </citation>
    <scope>NUCLEOTIDE SEQUENCE [LARGE SCALE GENOMIC DNA]</scope>
    <source>
        <strain>SE11</strain>
    </source>
</reference>
<proteinExistence type="inferred from homology"/>
<comment type="similarity">
    <text evidence="1">Belongs to the UPF0502 family.</text>
</comment>
<keyword id="KW-0007">Acetylation</keyword>